<sequence length="142" mass="15003">MAPKKKVAGLIKLQIVAGQANPAPPVGPALGQHGVNIMEFCKAYNAATENQRGNVIPVEITVYEDRSFTFTLKTPPAAKLLLKAAGVAKGSAEPHKTKVAKVTWDQVREIAETKKTDLNANDVDAAAKIIAGTARSMGITVE</sequence>
<protein>
    <recommendedName>
        <fullName evidence="1">Large ribosomal subunit protein uL11</fullName>
    </recommendedName>
    <alternativeName>
        <fullName evidence="2">50S ribosomal protein L11</fullName>
    </alternativeName>
</protein>
<comment type="function">
    <text evidence="1">Forms part of the ribosomal stalk which helps the ribosome interact with GTP-bound translation factors.</text>
</comment>
<comment type="subunit">
    <text evidence="1">Part of the ribosomal stalk of the 50S ribosomal subunit. Interacts with L10 and the large rRNA to form the base of the stalk. L10 forms an elongated spine to which L12 dimers bind in a sequential fashion forming a multimeric L10(L12)X complex.</text>
</comment>
<comment type="PTM">
    <text evidence="1">One or more lysine residues are methylated.</text>
</comment>
<comment type="similarity">
    <text evidence="1">Belongs to the universal ribosomal protein uL11 family.</text>
</comment>
<gene>
    <name evidence="1" type="primary">rplK</name>
    <name type="ordered locus">MT0669</name>
</gene>
<proteinExistence type="inferred from homology"/>
<dbReference type="EMBL" id="AE000516">
    <property type="protein sequence ID" value="AAK44894.1"/>
    <property type="molecule type" value="Genomic_DNA"/>
</dbReference>
<dbReference type="PIR" id="E70613">
    <property type="entry name" value="E70613"/>
</dbReference>
<dbReference type="RefSeq" id="WP_003403291.1">
    <property type="nucleotide sequence ID" value="NZ_KK341227.1"/>
</dbReference>
<dbReference type="SMR" id="P9WHE4"/>
<dbReference type="GeneID" id="45424600"/>
<dbReference type="KEGG" id="mtc:MT0669"/>
<dbReference type="PATRIC" id="fig|83331.31.peg.711"/>
<dbReference type="HOGENOM" id="CLU_074237_2_1_11"/>
<dbReference type="Proteomes" id="UP000001020">
    <property type="component" value="Chromosome"/>
</dbReference>
<dbReference type="GO" id="GO:0022625">
    <property type="term" value="C:cytosolic large ribosomal subunit"/>
    <property type="evidence" value="ECO:0007669"/>
    <property type="project" value="TreeGrafter"/>
</dbReference>
<dbReference type="GO" id="GO:0070180">
    <property type="term" value="F:large ribosomal subunit rRNA binding"/>
    <property type="evidence" value="ECO:0007669"/>
    <property type="project" value="UniProtKB-UniRule"/>
</dbReference>
<dbReference type="GO" id="GO:0003735">
    <property type="term" value="F:structural constituent of ribosome"/>
    <property type="evidence" value="ECO:0007669"/>
    <property type="project" value="InterPro"/>
</dbReference>
<dbReference type="GO" id="GO:0006412">
    <property type="term" value="P:translation"/>
    <property type="evidence" value="ECO:0007669"/>
    <property type="project" value="UniProtKB-UniRule"/>
</dbReference>
<dbReference type="CDD" id="cd00349">
    <property type="entry name" value="Ribosomal_L11"/>
    <property type="match status" value="1"/>
</dbReference>
<dbReference type="FunFam" id="1.10.10.250:FF:000001">
    <property type="entry name" value="50S ribosomal protein L11"/>
    <property type="match status" value="1"/>
</dbReference>
<dbReference type="FunFam" id="3.30.1550.10:FF:000001">
    <property type="entry name" value="50S ribosomal protein L11"/>
    <property type="match status" value="1"/>
</dbReference>
<dbReference type="Gene3D" id="1.10.10.250">
    <property type="entry name" value="Ribosomal protein L11, C-terminal domain"/>
    <property type="match status" value="1"/>
</dbReference>
<dbReference type="Gene3D" id="3.30.1550.10">
    <property type="entry name" value="Ribosomal protein L11/L12, N-terminal domain"/>
    <property type="match status" value="1"/>
</dbReference>
<dbReference type="HAMAP" id="MF_00736">
    <property type="entry name" value="Ribosomal_uL11"/>
    <property type="match status" value="1"/>
</dbReference>
<dbReference type="InterPro" id="IPR000911">
    <property type="entry name" value="Ribosomal_uL11"/>
</dbReference>
<dbReference type="InterPro" id="IPR006519">
    <property type="entry name" value="Ribosomal_uL11_bac-typ"/>
</dbReference>
<dbReference type="InterPro" id="IPR020783">
    <property type="entry name" value="Ribosomal_uL11_C"/>
</dbReference>
<dbReference type="InterPro" id="IPR036769">
    <property type="entry name" value="Ribosomal_uL11_C_sf"/>
</dbReference>
<dbReference type="InterPro" id="IPR020785">
    <property type="entry name" value="Ribosomal_uL11_CS"/>
</dbReference>
<dbReference type="InterPro" id="IPR020784">
    <property type="entry name" value="Ribosomal_uL11_N"/>
</dbReference>
<dbReference type="InterPro" id="IPR036796">
    <property type="entry name" value="Ribosomal_uL11_N_sf"/>
</dbReference>
<dbReference type="NCBIfam" id="TIGR01632">
    <property type="entry name" value="L11_bact"/>
    <property type="match status" value="1"/>
</dbReference>
<dbReference type="PANTHER" id="PTHR11661">
    <property type="entry name" value="60S RIBOSOMAL PROTEIN L12"/>
    <property type="match status" value="1"/>
</dbReference>
<dbReference type="PANTHER" id="PTHR11661:SF1">
    <property type="entry name" value="LARGE RIBOSOMAL SUBUNIT PROTEIN UL11M"/>
    <property type="match status" value="1"/>
</dbReference>
<dbReference type="Pfam" id="PF00298">
    <property type="entry name" value="Ribosomal_L11"/>
    <property type="match status" value="1"/>
</dbReference>
<dbReference type="Pfam" id="PF03946">
    <property type="entry name" value="Ribosomal_L11_N"/>
    <property type="match status" value="1"/>
</dbReference>
<dbReference type="SMART" id="SM00649">
    <property type="entry name" value="RL11"/>
    <property type="match status" value="1"/>
</dbReference>
<dbReference type="SUPFAM" id="SSF54747">
    <property type="entry name" value="Ribosomal L11/L12e N-terminal domain"/>
    <property type="match status" value="1"/>
</dbReference>
<dbReference type="SUPFAM" id="SSF46906">
    <property type="entry name" value="Ribosomal protein L11, C-terminal domain"/>
    <property type="match status" value="1"/>
</dbReference>
<dbReference type="PROSITE" id="PS00359">
    <property type="entry name" value="RIBOSOMAL_L11"/>
    <property type="match status" value="1"/>
</dbReference>
<keyword id="KW-0488">Methylation</keyword>
<keyword id="KW-1185">Reference proteome</keyword>
<keyword id="KW-0687">Ribonucleoprotein</keyword>
<keyword id="KW-0689">Ribosomal protein</keyword>
<keyword id="KW-0694">RNA-binding</keyword>
<keyword id="KW-0699">rRNA-binding</keyword>
<feature type="chain" id="PRO_0000428201" description="Large ribosomal subunit protein uL11">
    <location>
        <begin position="1"/>
        <end position="142"/>
    </location>
</feature>
<reference key="1">
    <citation type="journal article" date="2002" name="J. Bacteriol.">
        <title>Whole-genome comparison of Mycobacterium tuberculosis clinical and laboratory strains.</title>
        <authorList>
            <person name="Fleischmann R.D."/>
            <person name="Alland D."/>
            <person name="Eisen J.A."/>
            <person name="Carpenter L."/>
            <person name="White O."/>
            <person name="Peterson J.D."/>
            <person name="DeBoy R.T."/>
            <person name="Dodson R.J."/>
            <person name="Gwinn M.L."/>
            <person name="Haft D.H."/>
            <person name="Hickey E.K."/>
            <person name="Kolonay J.F."/>
            <person name="Nelson W.C."/>
            <person name="Umayam L.A."/>
            <person name="Ermolaeva M.D."/>
            <person name="Salzberg S.L."/>
            <person name="Delcher A."/>
            <person name="Utterback T.R."/>
            <person name="Weidman J.F."/>
            <person name="Khouri H.M."/>
            <person name="Gill J."/>
            <person name="Mikula A."/>
            <person name="Bishai W."/>
            <person name="Jacobs W.R. Jr."/>
            <person name="Venter J.C."/>
            <person name="Fraser C.M."/>
        </authorList>
    </citation>
    <scope>NUCLEOTIDE SEQUENCE [LARGE SCALE GENOMIC DNA]</scope>
    <source>
        <strain>CDC 1551 / Oshkosh</strain>
    </source>
</reference>
<organism>
    <name type="scientific">Mycobacterium tuberculosis (strain CDC 1551 / Oshkosh)</name>
    <dbReference type="NCBI Taxonomy" id="83331"/>
    <lineage>
        <taxon>Bacteria</taxon>
        <taxon>Bacillati</taxon>
        <taxon>Actinomycetota</taxon>
        <taxon>Actinomycetes</taxon>
        <taxon>Mycobacteriales</taxon>
        <taxon>Mycobacteriaceae</taxon>
        <taxon>Mycobacterium</taxon>
        <taxon>Mycobacterium tuberculosis complex</taxon>
    </lineage>
</organism>
<name>RL11_MYCTO</name>
<evidence type="ECO:0000255" key="1">
    <source>
        <dbReference type="HAMAP-Rule" id="MF_00736"/>
    </source>
</evidence>
<evidence type="ECO:0000305" key="2"/>
<accession>P9WHE4</accession>
<accession>L0T752</accession>
<accession>P66056</accession>
<accession>P96931</accession>